<gene>
    <name type="ordered locus">At5g24940</name>
    <name type="ORF">F6A4.150</name>
</gene>
<evidence type="ECO:0000250" key="1"/>
<evidence type="ECO:0000255" key="2">
    <source>
        <dbReference type="PROSITE-ProRule" id="PRU01082"/>
    </source>
</evidence>
<evidence type="ECO:0000256" key="3">
    <source>
        <dbReference type="SAM" id="MobiDB-lite"/>
    </source>
</evidence>
<evidence type="ECO:0000305" key="4"/>
<reference key="1">
    <citation type="journal article" date="2000" name="Nature">
        <title>Sequence and analysis of chromosome 5 of the plant Arabidopsis thaliana.</title>
        <authorList>
            <person name="Tabata S."/>
            <person name="Kaneko T."/>
            <person name="Nakamura Y."/>
            <person name="Kotani H."/>
            <person name="Kato T."/>
            <person name="Asamizu E."/>
            <person name="Miyajima N."/>
            <person name="Sasamoto S."/>
            <person name="Kimura T."/>
            <person name="Hosouchi T."/>
            <person name="Kawashima K."/>
            <person name="Kohara M."/>
            <person name="Matsumoto M."/>
            <person name="Matsuno A."/>
            <person name="Muraki A."/>
            <person name="Nakayama S."/>
            <person name="Nakazaki N."/>
            <person name="Naruo K."/>
            <person name="Okumura S."/>
            <person name="Shinpo S."/>
            <person name="Takeuchi C."/>
            <person name="Wada T."/>
            <person name="Watanabe A."/>
            <person name="Yamada M."/>
            <person name="Yasuda M."/>
            <person name="Sato S."/>
            <person name="de la Bastide M."/>
            <person name="Huang E."/>
            <person name="Spiegel L."/>
            <person name="Gnoj L."/>
            <person name="O'Shaughnessy A."/>
            <person name="Preston R."/>
            <person name="Habermann K."/>
            <person name="Murray J."/>
            <person name="Johnson D."/>
            <person name="Rohlfing T."/>
            <person name="Nelson J."/>
            <person name="Stoneking T."/>
            <person name="Pepin K."/>
            <person name="Spieth J."/>
            <person name="Sekhon M."/>
            <person name="Armstrong J."/>
            <person name="Becker M."/>
            <person name="Belter E."/>
            <person name="Cordum H."/>
            <person name="Cordes M."/>
            <person name="Courtney L."/>
            <person name="Courtney W."/>
            <person name="Dante M."/>
            <person name="Du H."/>
            <person name="Edwards J."/>
            <person name="Fryman J."/>
            <person name="Haakensen B."/>
            <person name="Lamar E."/>
            <person name="Latreille P."/>
            <person name="Leonard S."/>
            <person name="Meyer R."/>
            <person name="Mulvaney E."/>
            <person name="Ozersky P."/>
            <person name="Riley A."/>
            <person name="Strowmatt C."/>
            <person name="Wagner-McPherson C."/>
            <person name="Wollam A."/>
            <person name="Yoakum M."/>
            <person name="Bell M."/>
            <person name="Dedhia N."/>
            <person name="Parnell L."/>
            <person name="Shah R."/>
            <person name="Rodriguez M."/>
            <person name="Hoon See L."/>
            <person name="Vil D."/>
            <person name="Baker J."/>
            <person name="Kirchoff K."/>
            <person name="Toth K."/>
            <person name="King L."/>
            <person name="Bahret A."/>
            <person name="Miller B."/>
            <person name="Marra M.A."/>
            <person name="Martienssen R."/>
            <person name="McCombie W.R."/>
            <person name="Wilson R.K."/>
            <person name="Murphy G."/>
            <person name="Bancroft I."/>
            <person name="Volckaert G."/>
            <person name="Wambutt R."/>
            <person name="Duesterhoeft A."/>
            <person name="Stiekema W."/>
            <person name="Pohl T."/>
            <person name="Entian K.-D."/>
            <person name="Terryn N."/>
            <person name="Hartley N."/>
            <person name="Bent E."/>
            <person name="Johnson S."/>
            <person name="Langham S.-A."/>
            <person name="McCullagh B."/>
            <person name="Robben J."/>
            <person name="Grymonprez B."/>
            <person name="Zimmermann W."/>
            <person name="Ramsperger U."/>
            <person name="Wedler H."/>
            <person name="Balke K."/>
            <person name="Wedler E."/>
            <person name="Peters S."/>
            <person name="van Staveren M."/>
            <person name="Dirkse W."/>
            <person name="Mooijman P."/>
            <person name="Klein Lankhorst R."/>
            <person name="Weitzenegger T."/>
            <person name="Bothe G."/>
            <person name="Rose M."/>
            <person name="Hauf J."/>
            <person name="Berneiser S."/>
            <person name="Hempel S."/>
            <person name="Feldpausch M."/>
            <person name="Lamberth S."/>
            <person name="Villarroel R."/>
            <person name="Gielen J."/>
            <person name="Ardiles W."/>
            <person name="Bents O."/>
            <person name="Lemcke K."/>
            <person name="Kolesov G."/>
            <person name="Mayer K.F.X."/>
            <person name="Rudd S."/>
            <person name="Schoof H."/>
            <person name="Schueller C."/>
            <person name="Zaccaria P."/>
            <person name="Mewes H.-W."/>
            <person name="Bevan M."/>
            <person name="Fransz P.F."/>
        </authorList>
    </citation>
    <scope>NUCLEOTIDE SEQUENCE [LARGE SCALE GENOMIC DNA]</scope>
    <source>
        <strain>cv. Columbia</strain>
    </source>
</reference>
<reference key="2">
    <citation type="journal article" date="2017" name="Plant J.">
        <title>Araport11: a complete reannotation of the Arabidopsis thaliana reference genome.</title>
        <authorList>
            <person name="Cheng C.Y."/>
            <person name="Krishnakumar V."/>
            <person name="Chan A.P."/>
            <person name="Thibaud-Nissen F."/>
            <person name="Schobel S."/>
            <person name="Town C.D."/>
        </authorList>
    </citation>
    <scope>GENOME REANNOTATION</scope>
    <source>
        <strain>cv. Columbia</strain>
    </source>
</reference>
<reference key="3">
    <citation type="journal article" date="2002" name="Science">
        <title>Functional annotation of a full-length Arabidopsis cDNA collection.</title>
        <authorList>
            <person name="Seki M."/>
            <person name="Narusaka M."/>
            <person name="Kamiya A."/>
            <person name="Ishida J."/>
            <person name="Satou M."/>
            <person name="Sakurai T."/>
            <person name="Nakajima M."/>
            <person name="Enju A."/>
            <person name="Akiyama K."/>
            <person name="Oono Y."/>
            <person name="Muramatsu M."/>
            <person name="Hayashizaki Y."/>
            <person name="Kawai J."/>
            <person name="Carninci P."/>
            <person name="Itoh M."/>
            <person name="Ishii Y."/>
            <person name="Arakawa T."/>
            <person name="Shibata K."/>
            <person name="Shinagawa A."/>
            <person name="Shinozaki K."/>
        </authorList>
    </citation>
    <scope>NUCLEOTIDE SEQUENCE [LARGE SCALE MRNA]</scope>
    <source>
        <strain>cv. Columbia</strain>
    </source>
</reference>
<reference key="4">
    <citation type="submission" date="2005-05" db="EMBL/GenBank/DDBJ databases">
        <authorList>
            <person name="Underwood B.A."/>
            <person name="Xiao Y.-L."/>
            <person name="Moskal W.A. Jr."/>
            <person name="Monaghan E.L."/>
            <person name="Wang W."/>
            <person name="Redman J.C."/>
            <person name="Wu H.C."/>
            <person name="Utterback T."/>
            <person name="Town C.D."/>
        </authorList>
    </citation>
    <scope>NUCLEOTIDE SEQUENCE [LARGE SCALE MRNA]</scope>
    <source>
        <strain>cv. Columbia</strain>
    </source>
</reference>
<reference key="5">
    <citation type="journal article" date="2008" name="BMC Genomics">
        <title>Genome-wide and expression analysis of protein phosphatase 2C in rice and Arabidopsis.</title>
        <authorList>
            <person name="Xue T."/>
            <person name="Wang D."/>
            <person name="Zhang S."/>
            <person name="Ehlting J."/>
            <person name="Ni F."/>
            <person name="Jacab S."/>
            <person name="Zheng C."/>
            <person name="Zhong Y."/>
        </authorList>
    </citation>
    <scope>GENE FAMILY</scope>
    <scope>NOMENCLATURE</scope>
</reference>
<keyword id="KW-0378">Hydrolase</keyword>
<keyword id="KW-0460">Magnesium</keyword>
<keyword id="KW-0464">Manganese</keyword>
<keyword id="KW-0479">Metal-binding</keyword>
<keyword id="KW-0904">Protein phosphatase</keyword>
<keyword id="KW-1185">Reference proteome</keyword>
<dbReference type="EC" id="3.1.3.16"/>
<dbReference type="EMBL" id="AF069716">
    <property type="status" value="NOT_ANNOTATED_CDS"/>
    <property type="molecule type" value="Genomic_DNA"/>
</dbReference>
<dbReference type="EMBL" id="CP002688">
    <property type="protein sequence ID" value="AED93380.1"/>
    <property type="molecule type" value="Genomic_DNA"/>
</dbReference>
<dbReference type="EMBL" id="AK118047">
    <property type="protein sequence ID" value="BAC42678.1"/>
    <property type="status" value="ALT_SEQ"/>
    <property type="molecule type" value="mRNA"/>
</dbReference>
<dbReference type="EMBL" id="DQ056688">
    <property type="protein sequence ID" value="AAY78834.1"/>
    <property type="molecule type" value="mRNA"/>
</dbReference>
<dbReference type="RefSeq" id="NP_197876.1">
    <property type="nucleotide sequence ID" value="NM_122403.2"/>
</dbReference>
<dbReference type="SMR" id="Q4PSE8"/>
<dbReference type="BioGRID" id="17839">
    <property type="interactions" value="2"/>
</dbReference>
<dbReference type="FunCoup" id="Q4PSE8">
    <property type="interactions" value="929"/>
</dbReference>
<dbReference type="IntAct" id="Q4PSE8">
    <property type="interactions" value="1"/>
</dbReference>
<dbReference type="MINT" id="Q4PSE8"/>
<dbReference type="STRING" id="3702.Q4PSE8"/>
<dbReference type="PaxDb" id="3702-AT5G24940.1"/>
<dbReference type="ProteomicsDB" id="250914"/>
<dbReference type="EnsemblPlants" id="AT5G24940.1">
    <property type="protein sequence ID" value="AT5G24940.1"/>
    <property type="gene ID" value="AT5G24940"/>
</dbReference>
<dbReference type="GeneID" id="832564"/>
<dbReference type="Gramene" id="AT5G24940.1">
    <property type="protein sequence ID" value="AT5G24940.1"/>
    <property type="gene ID" value="AT5G24940"/>
</dbReference>
<dbReference type="KEGG" id="ath:AT5G24940"/>
<dbReference type="Araport" id="AT5G24940"/>
<dbReference type="TAIR" id="AT5G24940"/>
<dbReference type="eggNOG" id="KOG0698">
    <property type="taxonomic scope" value="Eukaryota"/>
</dbReference>
<dbReference type="HOGENOM" id="CLU_013173_7_0_1"/>
<dbReference type="InParanoid" id="Q4PSE8"/>
<dbReference type="OMA" id="KETNQDH"/>
<dbReference type="PhylomeDB" id="Q4PSE8"/>
<dbReference type="PRO" id="PR:Q4PSE8"/>
<dbReference type="Proteomes" id="UP000006548">
    <property type="component" value="Chromosome 5"/>
</dbReference>
<dbReference type="ExpressionAtlas" id="Q4PSE8">
    <property type="expression patterns" value="baseline and differential"/>
</dbReference>
<dbReference type="GO" id="GO:0009536">
    <property type="term" value="C:plastid"/>
    <property type="evidence" value="ECO:0007005"/>
    <property type="project" value="TAIR"/>
</dbReference>
<dbReference type="GO" id="GO:0046872">
    <property type="term" value="F:metal ion binding"/>
    <property type="evidence" value="ECO:0007669"/>
    <property type="project" value="UniProtKB-KW"/>
</dbReference>
<dbReference type="GO" id="GO:0004722">
    <property type="term" value="F:protein serine/threonine phosphatase activity"/>
    <property type="evidence" value="ECO:0007669"/>
    <property type="project" value="UniProtKB-EC"/>
</dbReference>
<dbReference type="CDD" id="cd00143">
    <property type="entry name" value="PP2Cc"/>
    <property type="match status" value="1"/>
</dbReference>
<dbReference type="FunFam" id="3.60.40.10:FF:000011">
    <property type="entry name" value="probable protein phosphatase 2C 59"/>
    <property type="match status" value="1"/>
</dbReference>
<dbReference type="Gene3D" id="3.60.40.10">
    <property type="entry name" value="PPM-type phosphatase domain"/>
    <property type="match status" value="1"/>
</dbReference>
<dbReference type="InterPro" id="IPR015655">
    <property type="entry name" value="PP2C"/>
</dbReference>
<dbReference type="InterPro" id="IPR000222">
    <property type="entry name" value="PP2C_BS"/>
</dbReference>
<dbReference type="InterPro" id="IPR036457">
    <property type="entry name" value="PPM-type-like_dom_sf"/>
</dbReference>
<dbReference type="InterPro" id="IPR001932">
    <property type="entry name" value="PPM-type_phosphatase-like_dom"/>
</dbReference>
<dbReference type="PANTHER" id="PTHR47992">
    <property type="entry name" value="PROTEIN PHOSPHATASE"/>
    <property type="match status" value="1"/>
</dbReference>
<dbReference type="Pfam" id="PF00481">
    <property type="entry name" value="PP2C"/>
    <property type="match status" value="1"/>
</dbReference>
<dbReference type="SMART" id="SM00331">
    <property type="entry name" value="PP2C_SIG"/>
    <property type="match status" value="1"/>
</dbReference>
<dbReference type="SMART" id="SM00332">
    <property type="entry name" value="PP2Cc"/>
    <property type="match status" value="1"/>
</dbReference>
<dbReference type="SUPFAM" id="SSF81606">
    <property type="entry name" value="PP2C-like"/>
    <property type="match status" value="1"/>
</dbReference>
<dbReference type="PROSITE" id="PS01032">
    <property type="entry name" value="PPM_1"/>
    <property type="match status" value="1"/>
</dbReference>
<dbReference type="PROSITE" id="PS51746">
    <property type="entry name" value="PPM_2"/>
    <property type="match status" value="1"/>
</dbReference>
<organism>
    <name type="scientific">Arabidopsis thaliana</name>
    <name type="common">Mouse-ear cress</name>
    <dbReference type="NCBI Taxonomy" id="3702"/>
    <lineage>
        <taxon>Eukaryota</taxon>
        <taxon>Viridiplantae</taxon>
        <taxon>Streptophyta</taxon>
        <taxon>Embryophyta</taxon>
        <taxon>Tracheophyta</taxon>
        <taxon>Spermatophyta</taxon>
        <taxon>Magnoliopsida</taxon>
        <taxon>eudicotyledons</taxon>
        <taxon>Gunneridae</taxon>
        <taxon>Pentapetalae</taxon>
        <taxon>rosids</taxon>
        <taxon>malvids</taxon>
        <taxon>Brassicales</taxon>
        <taxon>Brassicaceae</taxon>
        <taxon>Camelineae</taxon>
        <taxon>Arabidopsis</taxon>
    </lineage>
</organism>
<comment type="catalytic activity">
    <reaction>
        <text>O-phospho-L-seryl-[protein] + H2O = L-seryl-[protein] + phosphate</text>
        <dbReference type="Rhea" id="RHEA:20629"/>
        <dbReference type="Rhea" id="RHEA-COMP:9863"/>
        <dbReference type="Rhea" id="RHEA-COMP:11604"/>
        <dbReference type="ChEBI" id="CHEBI:15377"/>
        <dbReference type="ChEBI" id="CHEBI:29999"/>
        <dbReference type="ChEBI" id="CHEBI:43474"/>
        <dbReference type="ChEBI" id="CHEBI:83421"/>
        <dbReference type="EC" id="3.1.3.16"/>
    </reaction>
</comment>
<comment type="catalytic activity">
    <reaction>
        <text>O-phospho-L-threonyl-[protein] + H2O = L-threonyl-[protein] + phosphate</text>
        <dbReference type="Rhea" id="RHEA:47004"/>
        <dbReference type="Rhea" id="RHEA-COMP:11060"/>
        <dbReference type="Rhea" id="RHEA-COMP:11605"/>
        <dbReference type="ChEBI" id="CHEBI:15377"/>
        <dbReference type="ChEBI" id="CHEBI:30013"/>
        <dbReference type="ChEBI" id="CHEBI:43474"/>
        <dbReference type="ChEBI" id="CHEBI:61977"/>
        <dbReference type="EC" id="3.1.3.16"/>
    </reaction>
</comment>
<comment type="cofactor">
    <cofactor evidence="1">
        <name>Mg(2+)</name>
        <dbReference type="ChEBI" id="CHEBI:18420"/>
    </cofactor>
    <cofactor evidence="1">
        <name>Mn(2+)</name>
        <dbReference type="ChEBI" id="CHEBI:29035"/>
    </cofactor>
    <text evidence="1">Binds 2 magnesium or manganese ions per subunit.</text>
</comment>
<comment type="similarity">
    <text evidence="4">Belongs to the PP2C family.</text>
</comment>
<comment type="sequence caution" evidence="4">
    <conflict type="miscellaneous discrepancy">
        <sequence resource="EMBL-CDS" id="BAC42678"/>
    </conflict>
    <text>Intron retention.</text>
</comment>
<protein>
    <recommendedName>
        <fullName>Probable protein phosphatase 2C 71</fullName>
        <shortName>AtPP2C71</shortName>
        <ecNumber>3.1.3.16</ecNumber>
    </recommendedName>
</protein>
<feature type="chain" id="PRO_0000367991" description="Probable protein phosphatase 2C 71">
    <location>
        <begin position="1"/>
        <end position="447"/>
    </location>
</feature>
<feature type="domain" description="PPM-type phosphatase" evidence="2">
    <location>
        <begin position="33"/>
        <end position="279"/>
    </location>
</feature>
<feature type="region of interest" description="Disordered" evidence="3">
    <location>
        <begin position="284"/>
        <end position="447"/>
    </location>
</feature>
<feature type="compositionally biased region" description="Low complexity" evidence="3">
    <location>
        <begin position="284"/>
        <end position="297"/>
    </location>
</feature>
<feature type="compositionally biased region" description="Basic and acidic residues" evidence="3">
    <location>
        <begin position="305"/>
        <end position="331"/>
    </location>
</feature>
<feature type="compositionally biased region" description="Polar residues" evidence="3">
    <location>
        <begin position="346"/>
        <end position="374"/>
    </location>
</feature>
<feature type="compositionally biased region" description="Polar residues" evidence="3">
    <location>
        <begin position="392"/>
        <end position="423"/>
    </location>
</feature>
<feature type="compositionally biased region" description="Basic and acidic residues" evidence="3">
    <location>
        <begin position="424"/>
        <end position="438"/>
    </location>
</feature>
<feature type="binding site" evidence="1">
    <location>
        <position position="69"/>
    </location>
    <ligand>
        <name>Mn(2+)</name>
        <dbReference type="ChEBI" id="CHEBI:29035"/>
        <label>1</label>
    </ligand>
</feature>
<feature type="binding site" evidence="1">
    <location>
        <position position="69"/>
    </location>
    <ligand>
        <name>Mn(2+)</name>
        <dbReference type="ChEBI" id="CHEBI:29035"/>
        <label>2</label>
    </ligand>
</feature>
<feature type="binding site" evidence="1">
    <location>
        <position position="70"/>
    </location>
    <ligand>
        <name>Mn(2+)</name>
        <dbReference type="ChEBI" id="CHEBI:29035"/>
        <label>1</label>
    </ligand>
</feature>
<feature type="binding site" evidence="1">
    <location>
        <position position="231"/>
    </location>
    <ligand>
        <name>Mn(2+)</name>
        <dbReference type="ChEBI" id="CHEBI:29035"/>
        <label>2</label>
    </ligand>
</feature>
<feature type="binding site" evidence="1">
    <location>
        <position position="270"/>
    </location>
    <ligand>
        <name>Mn(2+)</name>
        <dbReference type="ChEBI" id="CHEBI:29035"/>
        <label>2</label>
    </ligand>
</feature>
<sequence>MGYMDLALSYSNQMRIVEAPASGGGLSQNGKFSYGYASSAGKRSSMEDFFETRIDGIDGEIVGLFGVFDGHGGSRAAEYVKRHLFSNLITHPKFISDTKSAIADAYTHTDSELLKSENSHTRDAGSTASTAILVGDRLLVANVGDSRAVICRGGNAFAVSRDHKPDQSDERERIENAGGFVMWAGTWRVGGVLAVSRAFGDRLLKQYVVADPEIQEEKIDDSLEFLILASDGLWDVFSNEEAVAVVKEVEDPEESTKKLVGEAIKRGSADNITCVVVRFLESKSANNNGSSSSEEANQVPTAVRNDSDHKISAKETNQDHTTVNKDLDRNTDSQSLNQKPIAARSADNSNQKPIATTATGHSVSSEQSGLTGEKSQMPIKIRSDSEPKSSAKVPNQTQSTVHNDLDSSTAKKPAATEQSGSTGERNRKPIKVHSDSAARKTTPSIFN</sequence>
<name>P2C71_ARATH</name>
<accession>Q4PSE8</accession>
<accession>Q8GTR8</accession>
<proteinExistence type="evidence at transcript level"/>